<accession>C4K7A9</accession>
<feature type="chain" id="PRO_1000214787" description="Small ribosomal subunit protein uS17">
    <location>
        <begin position="1"/>
        <end position="84"/>
    </location>
</feature>
<evidence type="ECO:0000255" key="1">
    <source>
        <dbReference type="HAMAP-Rule" id="MF_01345"/>
    </source>
</evidence>
<evidence type="ECO:0000305" key="2"/>
<dbReference type="EMBL" id="CP001277">
    <property type="protein sequence ID" value="ACQ68452.1"/>
    <property type="molecule type" value="Genomic_DNA"/>
</dbReference>
<dbReference type="RefSeq" id="WP_015874216.1">
    <property type="nucleotide sequence ID" value="NC_012751.1"/>
</dbReference>
<dbReference type="SMR" id="C4K7A9"/>
<dbReference type="STRING" id="572265.HDEF_1857"/>
<dbReference type="GeneID" id="66261442"/>
<dbReference type="KEGG" id="hde:HDEF_1857"/>
<dbReference type="eggNOG" id="COG0186">
    <property type="taxonomic scope" value="Bacteria"/>
</dbReference>
<dbReference type="HOGENOM" id="CLU_073626_1_1_6"/>
<dbReference type="Proteomes" id="UP000002334">
    <property type="component" value="Chromosome"/>
</dbReference>
<dbReference type="GO" id="GO:0022627">
    <property type="term" value="C:cytosolic small ribosomal subunit"/>
    <property type="evidence" value="ECO:0007669"/>
    <property type="project" value="TreeGrafter"/>
</dbReference>
<dbReference type="GO" id="GO:0019843">
    <property type="term" value="F:rRNA binding"/>
    <property type="evidence" value="ECO:0007669"/>
    <property type="project" value="UniProtKB-UniRule"/>
</dbReference>
<dbReference type="GO" id="GO:0003735">
    <property type="term" value="F:structural constituent of ribosome"/>
    <property type="evidence" value="ECO:0007669"/>
    <property type="project" value="InterPro"/>
</dbReference>
<dbReference type="GO" id="GO:0006412">
    <property type="term" value="P:translation"/>
    <property type="evidence" value="ECO:0007669"/>
    <property type="project" value="UniProtKB-UniRule"/>
</dbReference>
<dbReference type="CDD" id="cd00364">
    <property type="entry name" value="Ribosomal_uS17"/>
    <property type="match status" value="1"/>
</dbReference>
<dbReference type="FunFam" id="2.40.50.140:FF:000014">
    <property type="entry name" value="30S ribosomal protein S17"/>
    <property type="match status" value="1"/>
</dbReference>
<dbReference type="Gene3D" id="2.40.50.140">
    <property type="entry name" value="Nucleic acid-binding proteins"/>
    <property type="match status" value="1"/>
</dbReference>
<dbReference type="HAMAP" id="MF_01345_B">
    <property type="entry name" value="Ribosomal_uS17_B"/>
    <property type="match status" value="1"/>
</dbReference>
<dbReference type="InterPro" id="IPR012340">
    <property type="entry name" value="NA-bd_OB-fold"/>
</dbReference>
<dbReference type="InterPro" id="IPR000266">
    <property type="entry name" value="Ribosomal_uS17"/>
</dbReference>
<dbReference type="InterPro" id="IPR019984">
    <property type="entry name" value="Ribosomal_uS17_bact/chlr"/>
</dbReference>
<dbReference type="InterPro" id="IPR019979">
    <property type="entry name" value="Ribosomal_uS17_CS"/>
</dbReference>
<dbReference type="NCBIfam" id="NF004123">
    <property type="entry name" value="PRK05610.1"/>
    <property type="match status" value="1"/>
</dbReference>
<dbReference type="NCBIfam" id="TIGR03635">
    <property type="entry name" value="uS17_bact"/>
    <property type="match status" value="1"/>
</dbReference>
<dbReference type="PANTHER" id="PTHR10744">
    <property type="entry name" value="40S RIBOSOMAL PROTEIN S11 FAMILY MEMBER"/>
    <property type="match status" value="1"/>
</dbReference>
<dbReference type="PANTHER" id="PTHR10744:SF1">
    <property type="entry name" value="SMALL RIBOSOMAL SUBUNIT PROTEIN US17M"/>
    <property type="match status" value="1"/>
</dbReference>
<dbReference type="Pfam" id="PF00366">
    <property type="entry name" value="Ribosomal_S17"/>
    <property type="match status" value="1"/>
</dbReference>
<dbReference type="PRINTS" id="PR00973">
    <property type="entry name" value="RIBOSOMALS17"/>
</dbReference>
<dbReference type="SUPFAM" id="SSF50249">
    <property type="entry name" value="Nucleic acid-binding proteins"/>
    <property type="match status" value="1"/>
</dbReference>
<dbReference type="PROSITE" id="PS00056">
    <property type="entry name" value="RIBOSOMAL_S17"/>
    <property type="match status" value="1"/>
</dbReference>
<proteinExistence type="inferred from homology"/>
<reference key="1">
    <citation type="journal article" date="2009" name="Proc. Natl. Acad. Sci. U.S.A.">
        <title>Hamiltonella defensa, genome evolution of protective bacterial endosymbiont from pathogenic ancestors.</title>
        <authorList>
            <person name="Degnan P.H."/>
            <person name="Yu Y."/>
            <person name="Sisneros N."/>
            <person name="Wing R.A."/>
            <person name="Moran N.A."/>
        </authorList>
    </citation>
    <scope>NUCLEOTIDE SEQUENCE [LARGE SCALE GENOMIC DNA]</scope>
    <source>
        <strain>5AT</strain>
    </source>
</reference>
<comment type="function">
    <text evidence="1">One of the primary rRNA binding proteins, it binds specifically to the 5'-end of 16S ribosomal RNA.</text>
</comment>
<comment type="subunit">
    <text evidence="1">Part of the 30S ribosomal subunit.</text>
</comment>
<comment type="similarity">
    <text evidence="1">Belongs to the universal ribosomal protein uS17 family.</text>
</comment>
<protein>
    <recommendedName>
        <fullName evidence="1">Small ribosomal subunit protein uS17</fullName>
    </recommendedName>
    <alternativeName>
        <fullName evidence="2">30S ribosomal protein S17</fullName>
    </alternativeName>
</protein>
<sequence length="84" mass="9721">MNNNTRTLQCRVISNKMQKSAVVAFERFVKHSIYGKFIRRTTKLHIHDENNECNVGDIVSIRECRPISKTKAWTFVGVIKKALT</sequence>
<organism>
    <name type="scientific">Hamiltonella defensa subsp. Acyrthosiphon pisum (strain 5AT)</name>
    <dbReference type="NCBI Taxonomy" id="572265"/>
    <lineage>
        <taxon>Bacteria</taxon>
        <taxon>Pseudomonadati</taxon>
        <taxon>Pseudomonadota</taxon>
        <taxon>Gammaproteobacteria</taxon>
        <taxon>Enterobacterales</taxon>
        <taxon>Enterobacteriaceae</taxon>
        <taxon>aphid secondary symbionts</taxon>
        <taxon>Candidatus Hamiltonella</taxon>
    </lineage>
</organism>
<gene>
    <name evidence="1" type="primary">rpsQ</name>
    <name type="ordered locus">HDEF_1857</name>
</gene>
<name>RS17_HAMD5</name>
<keyword id="KW-0687">Ribonucleoprotein</keyword>
<keyword id="KW-0689">Ribosomal protein</keyword>
<keyword id="KW-0694">RNA-binding</keyword>
<keyword id="KW-0699">rRNA-binding</keyword>